<comment type="subcellular location">
    <subcellularLocation>
        <location evidence="1">Cytoplasm</location>
    </subcellularLocation>
</comment>
<comment type="induction">
    <text>In response to low temperature.</text>
</comment>
<reference key="1">
    <citation type="submission" date="1995-10" db="EMBL/GenBank/DDBJ databases">
        <authorList>
            <person name="Av-Gay Y."/>
            <person name="Ravin S."/>
            <person name="Aharonowitz Y."/>
            <person name="Cohen G."/>
        </authorList>
    </citation>
    <scope>NUCLEOTIDE SEQUENCE [GENOMIC DNA]</scope>
    <source>
        <strain>A3(2) / NRRL B-16638</strain>
    </source>
</reference>
<reference key="2">
    <citation type="journal article" date="2002" name="Nature">
        <title>Complete genome sequence of the model actinomycete Streptomyces coelicolor A3(2).</title>
        <authorList>
            <person name="Bentley S.D."/>
            <person name="Chater K.F."/>
            <person name="Cerdeno-Tarraga A.-M."/>
            <person name="Challis G.L."/>
            <person name="Thomson N.R."/>
            <person name="James K.D."/>
            <person name="Harris D.E."/>
            <person name="Quail M.A."/>
            <person name="Kieser H."/>
            <person name="Harper D."/>
            <person name="Bateman A."/>
            <person name="Brown S."/>
            <person name="Chandra G."/>
            <person name="Chen C.W."/>
            <person name="Collins M."/>
            <person name="Cronin A."/>
            <person name="Fraser A."/>
            <person name="Goble A."/>
            <person name="Hidalgo J."/>
            <person name="Hornsby T."/>
            <person name="Howarth S."/>
            <person name="Huang C.-H."/>
            <person name="Kieser T."/>
            <person name="Larke L."/>
            <person name="Murphy L.D."/>
            <person name="Oliver K."/>
            <person name="O'Neil S."/>
            <person name="Rabbinowitsch E."/>
            <person name="Rajandream M.A."/>
            <person name="Rutherford K.M."/>
            <person name="Rutter S."/>
            <person name="Seeger K."/>
            <person name="Saunders D."/>
            <person name="Sharp S."/>
            <person name="Squares R."/>
            <person name="Squares S."/>
            <person name="Taylor K."/>
            <person name="Warren T."/>
            <person name="Wietzorrek A."/>
            <person name="Woodward J.R."/>
            <person name="Barrell B.G."/>
            <person name="Parkhill J."/>
            <person name="Hopwood D.A."/>
        </authorList>
    </citation>
    <scope>NUCLEOTIDE SEQUENCE [LARGE SCALE GENOMIC DNA]</scope>
    <source>
        <strain>ATCC BAA-471 / A3(2) / M145</strain>
    </source>
</reference>
<accession>P48859</accession>
<dbReference type="EMBL" id="X92686">
    <property type="protein sequence ID" value="CAA63367.1"/>
    <property type="molecule type" value="Genomic_DNA"/>
</dbReference>
<dbReference type="EMBL" id="AL939105">
    <property type="protein sequence ID" value="CAB59584.1"/>
    <property type="molecule type" value="Genomic_DNA"/>
</dbReference>
<dbReference type="PIR" id="T42055">
    <property type="entry name" value="T42055"/>
</dbReference>
<dbReference type="RefSeq" id="NP_624841.1">
    <property type="nucleotide sequence ID" value="NC_003888.3"/>
</dbReference>
<dbReference type="RefSeq" id="WP_003978336.1">
    <property type="nucleotide sequence ID" value="NZ_VNID01000015.1"/>
</dbReference>
<dbReference type="SMR" id="P48859"/>
<dbReference type="FunCoup" id="P48859">
    <property type="interactions" value="10"/>
</dbReference>
<dbReference type="STRING" id="100226.gene:17758110"/>
<dbReference type="PaxDb" id="100226-SCO0527"/>
<dbReference type="KEGG" id="sco:SCO0527"/>
<dbReference type="PATRIC" id="fig|100226.15.peg.507"/>
<dbReference type="eggNOG" id="COG1278">
    <property type="taxonomic scope" value="Bacteria"/>
</dbReference>
<dbReference type="HOGENOM" id="CLU_117621_0_3_11"/>
<dbReference type="InParanoid" id="P48859"/>
<dbReference type="OrthoDB" id="7477356at2"/>
<dbReference type="PhylomeDB" id="P48859"/>
<dbReference type="Proteomes" id="UP000001973">
    <property type="component" value="Chromosome"/>
</dbReference>
<dbReference type="GO" id="GO:0005737">
    <property type="term" value="C:cytoplasm"/>
    <property type="evidence" value="ECO:0007669"/>
    <property type="project" value="UniProtKB-SubCell"/>
</dbReference>
<dbReference type="GO" id="GO:0003677">
    <property type="term" value="F:DNA binding"/>
    <property type="evidence" value="ECO:0007669"/>
    <property type="project" value="UniProtKB-KW"/>
</dbReference>
<dbReference type="GO" id="GO:0003676">
    <property type="term" value="F:nucleic acid binding"/>
    <property type="evidence" value="ECO:0000318"/>
    <property type="project" value="GO_Central"/>
</dbReference>
<dbReference type="GO" id="GO:0010468">
    <property type="term" value="P:regulation of gene expression"/>
    <property type="evidence" value="ECO:0000318"/>
    <property type="project" value="GO_Central"/>
</dbReference>
<dbReference type="CDD" id="cd04458">
    <property type="entry name" value="CSP_CDS"/>
    <property type="match status" value="1"/>
</dbReference>
<dbReference type="FunFam" id="2.40.50.140:FF:000006">
    <property type="entry name" value="Cold shock protein CspC"/>
    <property type="match status" value="1"/>
</dbReference>
<dbReference type="Gene3D" id="6.20.370.130">
    <property type="match status" value="1"/>
</dbReference>
<dbReference type="Gene3D" id="2.40.50.140">
    <property type="entry name" value="Nucleic acid-binding proteins"/>
    <property type="match status" value="1"/>
</dbReference>
<dbReference type="InterPro" id="IPR012156">
    <property type="entry name" value="Cold_shock_CspA"/>
</dbReference>
<dbReference type="InterPro" id="IPR050181">
    <property type="entry name" value="Cold_shock_domain"/>
</dbReference>
<dbReference type="InterPro" id="IPR011129">
    <property type="entry name" value="CSD"/>
</dbReference>
<dbReference type="InterPro" id="IPR019844">
    <property type="entry name" value="CSD_CS"/>
</dbReference>
<dbReference type="InterPro" id="IPR002059">
    <property type="entry name" value="CSP_DNA-bd"/>
</dbReference>
<dbReference type="InterPro" id="IPR012340">
    <property type="entry name" value="NA-bd_OB-fold"/>
</dbReference>
<dbReference type="PANTHER" id="PTHR11544">
    <property type="entry name" value="COLD SHOCK DOMAIN CONTAINING PROTEINS"/>
    <property type="match status" value="1"/>
</dbReference>
<dbReference type="Pfam" id="PF00313">
    <property type="entry name" value="CSD"/>
    <property type="match status" value="1"/>
</dbReference>
<dbReference type="PIRSF" id="PIRSF002599">
    <property type="entry name" value="Cold_shock_A"/>
    <property type="match status" value="1"/>
</dbReference>
<dbReference type="PRINTS" id="PR00050">
    <property type="entry name" value="COLDSHOCK"/>
</dbReference>
<dbReference type="SMART" id="SM00357">
    <property type="entry name" value="CSP"/>
    <property type="match status" value="1"/>
</dbReference>
<dbReference type="SUPFAM" id="SSF50249">
    <property type="entry name" value="Nucleic acid-binding proteins"/>
    <property type="match status" value="1"/>
</dbReference>
<dbReference type="PROSITE" id="PS00352">
    <property type="entry name" value="CSD_1"/>
    <property type="match status" value="1"/>
</dbReference>
<dbReference type="PROSITE" id="PS51857">
    <property type="entry name" value="CSD_2"/>
    <property type="match status" value="1"/>
</dbReference>
<protein>
    <recommendedName>
        <fullName>Cold shock protein ScoF</fullName>
    </recommendedName>
</protein>
<proteinExistence type="evidence at transcript level"/>
<sequence length="67" mass="7179">MASGTVKWFNSEKGFGFIAQDGGGPDVFAHYSNINAQGYRELQEGQAVTFDITQGQKGPQAENITPA</sequence>
<evidence type="ECO:0000305" key="1"/>
<gene>
    <name type="primary">scoF</name>
    <name type="ordered locus">SCO0527</name>
    <name type="ORF">SCF11.07c</name>
</gene>
<keyword id="KW-0010">Activator</keyword>
<keyword id="KW-0963">Cytoplasm</keyword>
<keyword id="KW-0238">DNA-binding</keyword>
<keyword id="KW-1185">Reference proteome</keyword>
<keyword id="KW-0346">Stress response</keyword>
<keyword id="KW-0804">Transcription</keyword>
<keyword id="KW-0805">Transcription regulation</keyword>
<organism>
    <name type="scientific">Streptomyces coelicolor (strain ATCC BAA-471 / A3(2) / M145)</name>
    <dbReference type="NCBI Taxonomy" id="100226"/>
    <lineage>
        <taxon>Bacteria</taxon>
        <taxon>Bacillati</taxon>
        <taxon>Actinomycetota</taxon>
        <taxon>Actinomycetes</taxon>
        <taxon>Kitasatosporales</taxon>
        <taxon>Streptomycetaceae</taxon>
        <taxon>Streptomyces</taxon>
        <taxon>Streptomyces albidoflavus group</taxon>
    </lineage>
</organism>
<name>CSPF_STRCO</name>
<feature type="chain" id="PRO_0000100331" description="Cold shock protein ScoF">
    <location>
        <begin position="1"/>
        <end position="67"/>
    </location>
</feature>
<feature type="domain" description="CSD">
    <location>
        <begin position="4"/>
        <end position="64"/>
    </location>
</feature>